<evidence type="ECO:0000255" key="1">
    <source>
        <dbReference type="HAMAP-Rule" id="MF_00366"/>
    </source>
</evidence>
<organism>
    <name type="scientific">Clostridium perfringens (strain 13 / Type A)</name>
    <dbReference type="NCBI Taxonomy" id="195102"/>
    <lineage>
        <taxon>Bacteria</taxon>
        <taxon>Bacillati</taxon>
        <taxon>Bacillota</taxon>
        <taxon>Clostridia</taxon>
        <taxon>Eubacteriales</taxon>
        <taxon>Clostridiaceae</taxon>
        <taxon>Clostridium</taxon>
    </lineage>
</organism>
<proteinExistence type="inferred from homology"/>
<name>RPOZ_CLOPE</name>
<comment type="function">
    <text evidence="1">Promotes RNA polymerase assembly. Latches the N- and C-terminal regions of the beta' subunit thereby facilitating its interaction with the beta and alpha subunits.</text>
</comment>
<comment type="catalytic activity">
    <reaction evidence="1">
        <text>RNA(n) + a ribonucleoside 5'-triphosphate = RNA(n+1) + diphosphate</text>
        <dbReference type="Rhea" id="RHEA:21248"/>
        <dbReference type="Rhea" id="RHEA-COMP:14527"/>
        <dbReference type="Rhea" id="RHEA-COMP:17342"/>
        <dbReference type="ChEBI" id="CHEBI:33019"/>
        <dbReference type="ChEBI" id="CHEBI:61557"/>
        <dbReference type="ChEBI" id="CHEBI:140395"/>
        <dbReference type="EC" id="2.7.7.6"/>
    </reaction>
</comment>
<comment type="subunit">
    <text evidence="1">The RNAP catalytic core consists of 2 alpha, 1 beta, 1 beta' and 1 omega subunit. When a sigma factor is associated with the core the holoenzyme is formed, which can initiate transcription.</text>
</comment>
<comment type="similarity">
    <text evidence="1">Belongs to the RNA polymerase subunit omega family.</text>
</comment>
<dbReference type="EC" id="2.7.7.6" evidence="1"/>
<dbReference type="EMBL" id="BA000016">
    <property type="protein sequence ID" value="BAB81453.1"/>
    <property type="molecule type" value="Genomic_DNA"/>
</dbReference>
<dbReference type="RefSeq" id="WP_003449449.1">
    <property type="nucleotide sequence ID" value="NC_003366.1"/>
</dbReference>
<dbReference type="SMR" id="Q8XJK9"/>
<dbReference type="STRING" id="195102.gene:10491011"/>
<dbReference type="GeneID" id="93001716"/>
<dbReference type="KEGG" id="cpe:CPE1747"/>
<dbReference type="HOGENOM" id="CLU_125406_6_1_9"/>
<dbReference type="Proteomes" id="UP000000818">
    <property type="component" value="Chromosome"/>
</dbReference>
<dbReference type="GO" id="GO:0000428">
    <property type="term" value="C:DNA-directed RNA polymerase complex"/>
    <property type="evidence" value="ECO:0007669"/>
    <property type="project" value="UniProtKB-KW"/>
</dbReference>
<dbReference type="GO" id="GO:0003677">
    <property type="term" value="F:DNA binding"/>
    <property type="evidence" value="ECO:0007669"/>
    <property type="project" value="UniProtKB-UniRule"/>
</dbReference>
<dbReference type="GO" id="GO:0003899">
    <property type="term" value="F:DNA-directed RNA polymerase activity"/>
    <property type="evidence" value="ECO:0007669"/>
    <property type="project" value="UniProtKB-UniRule"/>
</dbReference>
<dbReference type="GO" id="GO:0006351">
    <property type="term" value="P:DNA-templated transcription"/>
    <property type="evidence" value="ECO:0007669"/>
    <property type="project" value="UniProtKB-UniRule"/>
</dbReference>
<dbReference type="Gene3D" id="3.90.940.10">
    <property type="match status" value="1"/>
</dbReference>
<dbReference type="HAMAP" id="MF_00366">
    <property type="entry name" value="RNApol_bact_RpoZ"/>
    <property type="match status" value="1"/>
</dbReference>
<dbReference type="InterPro" id="IPR003716">
    <property type="entry name" value="DNA-dir_RNA_pol_omega"/>
</dbReference>
<dbReference type="InterPro" id="IPR006110">
    <property type="entry name" value="Pol_omega/Rpo6/RPB6"/>
</dbReference>
<dbReference type="InterPro" id="IPR036161">
    <property type="entry name" value="RPB6/omega-like_sf"/>
</dbReference>
<dbReference type="NCBIfam" id="TIGR00690">
    <property type="entry name" value="rpoZ"/>
    <property type="match status" value="1"/>
</dbReference>
<dbReference type="PANTHER" id="PTHR34476">
    <property type="entry name" value="DNA-DIRECTED RNA POLYMERASE SUBUNIT OMEGA"/>
    <property type="match status" value="1"/>
</dbReference>
<dbReference type="PANTHER" id="PTHR34476:SF1">
    <property type="entry name" value="DNA-DIRECTED RNA POLYMERASE SUBUNIT OMEGA"/>
    <property type="match status" value="1"/>
</dbReference>
<dbReference type="Pfam" id="PF01192">
    <property type="entry name" value="RNA_pol_Rpb6"/>
    <property type="match status" value="1"/>
</dbReference>
<dbReference type="SMART" id="SM01409">
    <property type="entry name" value="RNA_pol_Rpb6"/>
    <property type="match status" value="1"/>
</dbReference>
<dbReference type="SUPFAM" id="SSF63562">
    <property type="entry name" value="RPB6/omega subunit-like"/>
    <property type="match status" value="1"/>
</dbReference>
<gene>
    <name evidence="1" type="primary">rpoZ</name>
    <name type="ordered locus">CPE1747</name>
</gene>
<reference key="1">
    <citation type="journal article" date="2002" name="Proc. Natl. Acad. Sci. U.S.A.">
        <title>Complete genome sequence of Clostridium perfringens, an anaerobic flesh-eater.</title>
        <authorList>
            <person name="Shimizu T."/>
            <person name="Ohtani K."/>
            <person name="Hirakawa H."/>
            <person name="Ohshima K."/>
            <person name="Yamashita A."/>
            <person name="Shiba T."/>
            <person name="Ogasawara N."/>
            <person name="Hattori M."/>
            <person name="Kuhara S."/>
            <person name="Hayashi H."/>
        </authorList>
    </citation>
    <scope>NUCLEOTIDE SEQUENCE [LARGE SCALE GENOMIC DNA]</scope>
    <source>
        <strain>13 / Type A</strain>
    </source>
</reference>
<sequence>MNNSMINPSIVDLLKRVEDRYSLVILSAKRARQIIDGAETFVDVESNKPLTIAINEIDEGFVNYKDTEEK</sequence>
<keyword id="KW-0240">DNA-directed RNA polymerase</keyword>
<keyword id="KW-0548">Nucleotidyltransferase</keyword>
<keyword id="KW-1185">Reference proteome</keyword>
<keyword id="KW-0804">Transcription</keyword>
<keyword id="KW-0808">Transferase</keyword>
<feature type="chain" id="PRO_0000128928" description="DNA-directed RNA polymerase subunit omega">
    <location>
        <begin position="1"/>
        <end position="70"/>
    </location>
</feature>
<protein>
    <recommendedName>
        <fullName evidence="1">DNA-directed RNA polymerase subunit omega</fullName>
        <shortName evidence="1">RNAP omega subunit</shortName>
        <ecNumber evidence="1">2.7.7.6</ecNumber>
    </recommendedName>
    <alternativeName>
        <fullName evidence="1">RNA polymerase omega subunit</fullName>
    </alternativeName>
    <alternativeName>
        <fullName evidence="1">Transcriptase subunit omega</fullName>
    </alternativeName>
</protein>
<accession>Q8XJK9</accession>